<name>EPMA_ECO5E</name>
<organism>
    <name type="scientific">Escherichia coli O157:H7 (strain EC4115 / EHEC)</name>
    <dbReference type="NCBI Taxonomy" id="444450"/>
    <lineage>
        <taxon>Bacteria</taxon>
        <taxon>Pseudomonadati</taxon>
        <taxon>Pseudomonadota</taxon>
        <taxon>Gammaproteobacteria</taxon>
        <taxon>Enterobacterales</taxon>
        <taxon>Enterobacteriaceae</taxon>
        <taxon>Escherichia</taxon>
    </lineage>
</organism>
<gene>
    <name evidence="1" type="primary">epmA</name>
    <name type="synonym">yjeA</name>
    <name type="ordered locus">ECH74115_5673</name>
</gene>
<accession>B5Z2G6</accession>
<keyword id="KW-0067">ATP-binding</keyword>
<keyword id="KW-0436">Ligase</keyword>
<keyword id="KW-0547">Nucleotide-binding</keyword>
<sequence>MSETASWQPSASIPNLLKRAAIMAEIRRFFADRGVLEVETPCMSQATVTDIHLVPFETRFVGPGHSQGMNLWLMTSPEYHMKRLLVAGCGPVFQLCRSFRNEEMGRYHNPEFTMLEWYRPHYDMYRLMNEVDDLLQQVLDCPAAESLSYQQAFLRYLEIDPLSADKTQLREVAAKLDLSNVADTEEDRDTLLQLLFTFGVEPNIGKEKPTFVYHFPASQASLAQISTEDHRVAERFEVYYKGIELANGFHELTDAREQQQRFEQDNRKRAARGLPQHPIDQNLIEALKVGMPDCSGVALGVDRLVMLALGAETLAEVIAFSVDRA</sequence>
<comment type="function">
    <text evidence="1">With EpmB is involved in the beta-lysylation step of the post-translational modification of translation elongation factor P (EF-P) on 'Lys-34'. Catalyzes the ATP-dependent activation of (R)-beta-lysine produced by EpmB, forming a lysyl-adenylate, from which the beta-lysyl moiety is then transferred to the epsilon-amino group of EF-P 'Lys-34'.</text>
</comment>
<comment type="catalytic activity">
    <reaction evidence="1">
        <text>D-beta-lysine + L-lysyl-[protein] + ATP = N(6)-((3R)-3,6-diaminohexanoyl)-L-lysyl-[protein] + AMP + diphosphate + H(+)</text>
        <dbReference type="Rhea" id="RHEA:83435"/>
        <dbReference type="Rhea" id="RHEA-COMP:9752"/>
        <dbReference type="Rhea" id="RHEA-COMP:20131"/>
        <dbReference type="ChEBI" id="CHEBI:15378"/>
        <dbReference type="ChEBI" id="CHEBI:29969"/>
        <dbReference type="ChEBI" id="CHEBI:30616"/>
        <dbReference type="ChEBI" id="CHEBI:33019"/>
        <dbReference type="ChEBI" id="CHEBI:84138"/>
        <dbReference type="ChEBI" id="CHEBI:156053"/>
        <dbReference type="ChEBI" id="CHEBI:456215"/>
    </reaction>
    <physiologicalReaction direction="left-to-right" evidence="1">
        <dbReference type="Rhea" id="RHEA:83436"/>
    </physiologicalReaction>
</comment>
<comment type="subunit">
    <text evidence="1">Homodimer.</text>
</comment>
<comment type="similarity">
    <text evidence="1">Belongs to the class-II aminoacyl-tRNA synthetase family. EpmA subfamily.</text>
</comment>
<feature type="chain" id="PRO_1000097898" description="Elongation factor P--(R)-beta-lysine ligase">
    <location>
        <begin position="1"/>
        <end position="325"/>
    </location>
</feature>
<feature type="binding site" evidence="1">
    <location>
        <begin position="76"/>
        <end position="78"/>
    </location>
    <ligand>
        <name>substrate</name>
    </ligand>
</feature>
<feature type="binding site" evidence="1">
    <location>
        <begin position="100"/>
        <end position="102"/>
    </location>
    <ligand>
        <name>ATP</name>
        <dbReference type="ChEBI" id="CHEBI:30616"/>
    </ligand>
</feature>
<feature type="binding site" evidence="1">
    <location>
        <position position="109"/>
    </location>
    <ligand>
        <name>ATP</name>
        <dbReference type="ChEBI" id="CHEBI:30616"/>
    </ligand>
</feature>
<feature type="binding site" evidence="1">
    <location>
        <position position="118"/>
    </location>
    <ligand>
        <name>substrate</name>
    </ligand>
</feature>
<feature type="binding site" evidence="1">
    <location>
        <begin position="244"/>
        <end position="245"/>
    </location>
    <ligand>
        <name>ATP</name>
        <dbReference type="ChEBI" id="CHEBI:30616"/>
    </ligand>
</feature>
<feature type="binding site" evidence="1">
    <location>
        <position position="251"/>
    </location>
    <ligand>
        <name>substrate</name>
    </ligand>
</feature>
<feature type="binding site" evidence="1">
    <location>
        <position position="300"/>
    </location>
    <ligand>
        <name>ATP</name>
        <dbReference type="ChEBI" id="CHEBI:30616"/>
    </ligand>
</feature>
<dbReference type="EC" id="6.3.2.-" evidence="1"/>
<dbReference type="EMBL" id="CP001164">
    <property type="protein sequence ID" value="ACI34762.1"/>
    <property type="molecule type" value="Genomic_DNA"/>
</dbReference>
<dbReference type="RefSeq" id="WP_000004771.1">
    <property type="nucleotide sequence ID" value="NC_011353.1"/>
</dbReference>
<dbReference type="SMR" id="B5Z2G6"/>
<dbReference type="GeneID" id="93777667"/>
<dbReference type="KEGG" id="ecf:ECH74115_5673"/>
<dbReference type="HOGENOM" id="CLU_008255_1_1_6"/>
<dbReference type="GO" id="GO:0005829">
    <property type="term" value="C:cytosol"/>
    <property type="evidence" value="ECO:0007669"/>
    <property type="project" value="TreeGrafter"/>
</dbReference>
<dbReference type="GO" id="GO:0016880">
    <property type="term" value="F:acid-ammonia (or amide) ligase activity"/>
    <property type="evidence" value="ECO:0007669"/>
    <property type="project" value="UniProtKB-UniRule"/>
</dbReference>
<dbReference type="GO" id="GO:0005524">
    <property type="term" value="F:ATP binding"/>
    <property type="evidence" value="ECO:0007669"/>
    <property type="project" value="UniProtKB-UniRule"/>
</dbReference>
<dbReference type="GO" id="GO:0004824">
    <property type="term" value="F:lysine-tRNA ligase activity"/>
    <property type="evidence" value="ECO:0007669"/>
    <property type="project" value="InterPro"/>
</dbReference>
<dbReference type="GO" id="GO:0000049">
    <property type="term" value="F:tRNA binding"/>
    <property type="evidence" value="ECO:0007669"/>
    <property type="project" value="TreeGrafter"/>
</dbReference>
<dbReference type="GO" id="GO:0006430">
    <property type="term" value="P:lysyl-tRNA aminoacylation"/>
    <property type="evidence" value="ECO:0007669"/>
    <property type="project" value="InterPro"/>
</dbReference>
<dbReference type="FunFam" id="3.30.930.10:FF:000017">
    <property type="entry name" value="Elongation factor P--(R)-beta-lysine ligase"/>
    <property type="match status" value="1"/>
</dbReference>
<dbReference type="Gene3D" id="3.30.930.10">
    <property type="entry name" value="Bira Bifunctional Protein, Domain 2"/>
    <property type="match status" value="1"/>
</dbReference>
<dbReference type="HAMAP" id="MF_00174">
    <property type="entry name" value="EF_P_modif_A"/>
    <property type="match status" value="1"/>
</dbReference>
<dbReference type="InterPro" id="IPR004364">
    <property type="entry name" value="Aa-tRNA-synt_II"/>
</dbReference>
<dbReference type="InterPro" id="IPR006195">
    <property type="entry name" value="aa-tRNA-synth_II"/>
</dbReference>
<dbReference type="InterPro" id="IPR045864">
    <property type="entry name" value="aa-tRNA-synth_II/BPL/LPL"/>
</dbReference>
<dbReference type="InterPro" id="IPR004525">
    <property type="entry name" value="EpmA"/>
</dbReference>
<dbReference type="InterPro" id="IPR018149">
    <property type="entry name" value="Lys-tRNA-synth_II_C"/>
</dbReference>
<dbReference type="NCBIfam" id="TIGR00462">
    <property type="entry name" value="genX"/>
    <property type="match status" value="1"/>
</dbReference>
<dbReference type="NCBIfam" id="NF006828">
    <property type="entry name" value="PRK09350.1"/>
    <property type="match status" value="1"/>
</dbReference>
<dbReference type="PANTHER" id="PTHR42918:SF6">
    <property type="entry name" value="ELONGATION FACTOR P--(R)-BETA-LYSINE LIGASE"/>
    <property type="match status" value="1"/>
</dbReference>
<dbReference type="PANTHER" id="PTHR42918">
    <property type="entry name" value="LYSYL-TRNA SYNTHETASE"/>
    <property type="match status" value="1"/>
</dbReference>
<dbReference type="Pfam" id="PF00152">
    <property type="entry name" value="tRNA-synt_2"/>
    <property type="match status" value="1"/>
</dbReference>
<dbReference type="PRINTS" id="PR00982">
    <property type="entry name" value="TRNASYNTHLYS"/>
</dbReference>
<dbReference type="SUPFAM" id="SSF55681">
    <property type="entry name" value="Class II aaRS and biotin synthetases"/>
    <property type="match status" value="1"/>
</dbReference>
<dbReference type="PROSITE" id="PS50862">
    <property type="entry name" value="AA_TRNA_LIGASE_II"/>
    <property type="match status" value="1"/>
</dbReference>
<protein>
    <recommendedName>
        <fullName evidence="1">Elongation factor P--(R)-beta-lysine ligase</fullName>
        <shortName evidence="1">EF-P--(R)-beta-lysine ligase</shortName>
        <ecNumber evidence="1">6.3.2.-</ecNumber>
    </recommendedName>
    <alternativeName>
        <fullName evidence="1">EF-P post-translational modification enzyme A</fullName>
    </alternativeName>
    <alternativeName>
        <fullName evidence="1">EF-P-lysine lysyltransferase</fullName>
    </alternativeName>
</protein>
<reference key="1">
    <citation type="journal article" date="2011" name="Proc. Natl. Acad. Sci. U.S.A.">
        <title>Genomic anatomy of Escherichia coli O157:H7 outbreaks.</title>
        <authorList>
            <person name="Eppinger M."/>
            <person name="Mammel M.K."/>
            <person name="Leclerc J.E."/>
            <person name="Ravel J."/>
            <person name="Cebula T.A."/>
        </authorList>
    </citation>
    <scope>NUCLEOTIDE SEQUENCE [LARGE SCALE GENOMIC DNA]</scope>
    <source>
        <strain>EC4115 / EHEC</strain>
    </source>
</reference>
<proteinExistence type="inferred from homology"/>
<evidence type="ECO:0000255" key="1">
    <source>
        <dbReference type="HAMAP-Rule" id="MF_00174"/>
    </source>
</evidence>